<comment type="function">
    <text evidence="1">Catalyzes the cleavage of 5-oxoproline to form L-glutamate coupled to the hydrolysis of ATP to ADP and inorganic phosphate.</text>
</comment>
<comment type="catalytic activity">
    <reaction evidence="1">
        <text>5-oxo-L-proline + ATP + 2 H2O = L-glutamate + ADP + phosphate + H(+)</text>
        <dbReference type="Rhea" id="RHEA:10348"/>
        <dbReference type="ChEBI" id="CHEBI:15377"/>
        <dbReference type="ChEBI" id="CHEBI:15378"/>
        <dbReference type="ChEBI" id="CHEBI:29985"/>
        <dbReference type="ChEBI" id="CHEBI:30616"/>
        <dbReference type="ChEBI" id="CHEBI:43474"/>
        <dbReference type="ChEBI" id="CHEBI:58402"/>
        <dbReference type="ChEBI" id="CHEBI:456216"/>
        <dbReference type="EC" id="3.5.2.9"/>
    </reaction>
</comment>
<comment type="subunit">
    <text evidence="1">Forms a complex composed of PxpA, PxpB and PxpC.</text>
</comment>
<comment type="similarity">
    <text evidence="1">Belongs to the LamB/PxpA family.</text>
</comment>
<sequence>MKQVDLNADLAEGCGSDEALLQLITSANIACAQHAGSIADIRAALAYAQQNGVRIGAHPGYPDRENFGRTEMNLSEADLRACLNYQLGALQALCRDQGLEMAYVKPHGAMYNQAAKNRALADTVARIVADFDPKLKLMALSGSLLLEAGKAAGLGVISEVFADRRYMPDGTLVPRSRPDAQVDSDEEAIAQVLQMVRDGQVKAVDGSLVAVQADSICLHGDGPHAVVFAEKIRQELLAAGIKVSA</sequence>
<reference key="1">
    <citation type="journal article" date="2000" name="Infect. Immun.">
        <title>Molecular and biological analysis of eight genetic islands that distinguish Neisseria meningitidis from the closely related pathogen Neisseria gonorrhoeae.</title>
        <authorList>
            <person name="Klee S.R."/>
            <person name="Nassif X."/>
            <person name="Kusecek B."/>
            <person name="Merker P."/>
            <person name="Beretti J.-L."/>
            <person name="Achtman M."/>
            <person name="Tinsley C.R."/>
        </authorList>
    </citation>
    <scope>NUCLEOTIDE SEQUENCE [GENOMIC DNA]</scope>
    <source>
        <strain>DSM 15465 / Z2491</strain>
    </source>
</reference>
<reference key="2">
    <citation type="journal article" date="2000" name="Nature">
        <title>Complete DNA sequence of a serogroup A strain of Neisseria meningitidis Z2491.</title>
        <authorList>
            <person name="Parkhill J."/>
            <person name="Achtman M."/>
            <person name="James K.D."/>
            <person name="Bentley S.D."/>
            <person name="Churcher C.M."/>
            <person name="Klee S.R."/>
            <person name="Morelli G."/>
            <person name="Basham D."/>
            <person name="Brown D."/>
            <person name="Chillingworth T."/>
            <person name="Davies R.M."/>
            <person name="Davis P."/>
            <person name="Devlin K."/>
            <person name="Feltwell T."/>
            <person name="Hamlin N."/>
            <person name="Holroyd S."/>
            <person name="Jagels K."/>
            <person name="Leather S."/>
            <person name="Moule S."/>
            <person name="Mungall K.L."/>
            <person name="Quail M.A."/>
            <person name="Rajandream M.A."/>
            <person name="Rutherford K.M."/>
            <person name="Simmonds M."/>
            <person name="Skelton J."/>
            <person name="Whitehead S."/>
            <person name="Spratt B.G."/>
            <person name="Barrell B.G."/>
        </authorList>
    </citation>
    <scope>NUCLEOTIDE SEQUENCE [LARGE SCALE GENOMIC DNA]</scope>
    <source>
        <strain>DSM 15465 / Z2491</strain>
    </source>
</reference>
<gene>
    <name evidence="1" type="primary">pxpA</name>
    <name type="synonym">rni3</name>
    <name type="ordered locus">NMA0030</name>
</gene>
<organism>
    <name type="scientific">Neisseria meningitidis serogroup A / serotype 4A (strain DSM 15465 / Z2491)</name>
    <dbReference type="NCBI Taxonomy" id="122587"/>
    <lineage>
        <taxon>Bacteria</taxon>
        <taxon>Pseudomonadati</taxon>
        <taxon>Pseudomonadota</taxon>
        <taxon>Betaproteobacteria</taxon>
        <taxon>Neisseriales</taxon>
        <taxon>Neisseriaceae</taxon>
        <taxon>Neisseria</taxon>
    </lineage>
</organism>
<protein>
    <recommendedName>
        <fullName evidence="1">5-oxoprolinase subunit A</fullName>
        <shortName evidence="1">5-OPase subunit A</shortName>
        <ecNumber evidence="1">3.5.2.9</ecNumber>
    </recommendedName>
    <alternativeName>
        <fullName evidence="1">5-oxoprolinase (ATP-hydrolyzing) subunit A</fullName>
    </alternativeName>
</protein>
<name>PXPA_NEIMA</name>
<proteinExistence type="inferred from homology"/>
<dbReference type="EC" id="3.5.2.9" evidence="1"/>
<dbReference type="EMBL" id="AJ391262">
    <property type="protein sequence ID" value="CAB72038.1"/>
    <property type="molecule type" value="Genomic_DNA"/>
</dbReference>
<dbReference type="EMBL" id="AL157959">
    <property type="protein sequence ID" value="CAM07357.1"/>
    <property type="molecule type" value="Genomic_DNA"/>
</dbReference>
<dbReference type="PIR" id="F81223">
    <property type="entry name" value="F81223"/>
</dbReference>
<dbReference type="RefSeq" id="WP_002215593.1">
    <property type="nucleotide sequence ID" value="NC_003116.1"/>
</dbReference>
<dbReference type="SMR" id="P0A0Z1"/>
<dbReference type="EnsemblBacteria" id="CAM07357">
    <property type="protein sequence ID" value="CAM07357"/>
    <property type="gene ID" value="NMA0030"/>
</dbReference>
<dbReference type="GeneID" id="93387318"/>
<dbReference type="KEGG" id="nma:NMA0030"/>
<dbReference type="HOGENOM" id="CLU_069535_0_0_4"/>
<dbReference type="Proteomes" id="UP000000626">
    <property type="component" value="Chromosome"/>
</dbReference>
<dbReference type="GO" id="GO:0017168">
    <property type="term" value="F:5-oxoprolinase (ATP-hydrolyzing) activity"/>
    <property type="evidence" value="ECO:0007669"/>
    <property type="project" value="UniProtKB-UniRule"/>
</dbReference>
<dbReference type="GO" id="GO:0005524">
    <property type="term" value="F:ATP binding"/>
    <property type="evidence" value="ECO:0007669"/>
    <property type="project" value="UniProtKB-UniRule"/>
</dbReference>
<dbReference type="GO" id="GO:0005975">
    <property type="term" value="P:carbohydrate metabolic process"/>
    <property type="evidence" value="ECO:0007669"/>
    <property type="project" value="InterPro"/>
</dbReference>
<dbReference type="CDD" id="cd10800">
    <property type="entry name" value="LamB_YcsF_YbgL_like"/>
    <property type="match status" value="1"/>
</dbReference>
<dbReference type="Gene3D" id="3.20.20.370">
    <property type="entry name" value="Glycoside hydrolase/deacetylase"/>
    <property type="match status" value="1"/>
</dbReference>
<dbReference type="HAMAP" id="MF_00691">
    <property type="entry name" value="PxpA"/>
    <property type="match status" value="1"/>
</dbReference>
<dbReference type="InterPro" id="IPR011330">
    <property type="entry name" value="Glyco_hydro/deAcase_b/a-brl"/>
</dbReference>
<dbReference type="InterPro" id="IPR005501">
    <property type="entry name" value="LamB/YcsF/PxpA-like"/>
</dbReference>
<dbReference type="NCBIfam" id="NF003814">
    <property type="entry name" value="PRK05406.1-3"/>
    <property type="match status" value="1"/>
</dbReference>
<dbReference type="NCBIfam" id="NF003815">
    <property type="entry name" value="PRK05406.1-4"/>
    <property type="match status" value="1"/>
</dbReference>
<dbReference type="NCBIfam" id="NF003816">
    <property type="entry name" value="PRK05406.1-5"/>
    <property type="match status" value="1"/>
</dbReference>
<dbReference type="PANTHER" id="PTHR30292:SF0">
    <property type="entry name" value="5-OXOPROLINASE SUBUNIT A"/>
    <property type="match status" value="1"/>
</dbReference>
<dbReference type="PANTHER" id="PTHR30292">
    <property type="entry name" value="UNCHARACTERIZED PROTEIN YBGL-RELATED"/>
    <property type="match status" value="1"/>
</dbReference>
<dbReference type="Pfam" id="PF03746">
    <property type="entry name" value="LamB_YcsF"/>
    <property type="match status" value="1"/>
</dbReference>
<dbReference type="SUPFAM" id="SSF88713">
    <property type="entry name" value="Glycoside hydrolase/deacetylase"/>
    <property type="match status" value="1"/>
</dbReference>
<feature type="chain" id="PRO_0000185019" description="5-oxoprolinase subunit A">
    <location>
        <begin position="1"/>
        <end position="245"/>
    </location>
</feature>
<evidence type="ECO:0000255" key="1">
    <source>
        <dbReference type="HAMAP-Rule" id="MF_00691"/>
    </source>
</evidence>
<accession>P0A0Z1</accession>
<accession>A1INQ0</accession>
<accession>Q9JQN2</accession>
<keyword id="KW-0067">ATP-binding</keyword>
<keyword id="KW-0378">Hydrolase</keyword>
<keyword id="KW-0547">Nucleotide-binding</keyword>